<comment type="function">
    <text evidence="1">Catalyzes the anti-1,4-elimination of the C-3 phosphate and the C-6 proR hydrogen from 5-enolpyruvylshikimate-3-phosphate (EPSP) to yield chorismate, which is the branch point compound that serves as the starting substrate for the three terminal pathways of aromatic amino acid biosynthesis. This reaction introduces a second double bond into the aromatic ring system.</text>
</comment>
<comment type="catalytic activity">
    <reaction evidence="1">
        <text>5-O-(1-carboxyvinyl)-3-phosphoshikimate = chorismate + phosphate</text>
        <dbReference type="Rhea" id="RHEA:21020"/>
        <dbReference type="ChEBI" id="CHEBI:29748"/>
        <dbReference type="ChEBI" id="CHEBI:43474"/>
        <dbReference type="ChEBI" id="CHEBI:57701"/>
        <dbReference type="EC" id="4.2.3.5"/>
    </reaction>
</comment>
<comment type="cofactor">
    <cofactor evidence="1">
        <name>FMNH2</name>
        <dbReference type="ChEBI" id="CHEBI:57618"/>
    </cofactor>
    <text evidence="1">Reduced FMN (FMNH(2)).</text>
</comment>
<comment type="pathway">
    <text evidence="1">Metabolic intermediate biosynthesis; chorismate biosynthesis; chorismate from D-erythrose 4-phosphate and phosphoenolpyruvate: step 7/7.</text>
</comment>
<comment type="subunit">
    <text evidence="1">Homotetramer.</text>
</comment>
<comment type="similarity">
    <text evidence="1">Belongs to the chorismate synthase family.</text>
</comment>
<name>AROC_ANADE</name>
<dbReference type="EC" id="4.2.3.5" evidence="1"/>
<dbReference type="EMBL" id="CP000251">
    <property type="protein sequence ID" value="ABC79963.1"/>
    <property type="molecule type" value="Genomic_DNA"/>
</dbReference>
<dbReference type="RefSeq" id="WP_011419246.1">
    <property type="nucleotide sequence ID" value="NC_007760.1"/>
</dbReference>
<dbReference type="SMR" id="Q2IMD4"/>
<dbReference type="STRING" id="290397.Adeh_0186"/>
<dbReference type="KEGG" id="ade:Adeh_0186"/>
<dbReference type="eggNOG" id="COG0082">
    <property type="taxonomic scope" value="Bacteria"/>
</dbReference>
<dbReference type="HOGENOM" id="CLU_034547_2_0_7"/>
<dbReference type="OrthoDB" id="9771806at2"/>
<dbReference type="UniPathway" id="UPA00053">
    <property type="reaction ID" value="UER00090"/>
</dbReference>
<dbReference type="Proteomes" id="UP000001935">
    <property type="component" value="Chromosome"/>
</dbReference>
<dbReference type="GO" id="GO:0005829">
    <property type="term" value="C:cytosol"/>
    <property type="evidence" value="ECO:0007669"/>
    <property type="project" value="TreeGrafter"/>
</dbReference>
<dbReference type="GO" id="GO:0004107">
    <property type="term" value="F:chorismate synthase activity"/>
    <property type="evidence" value="ECO:0007669"/>
    <property type="project" value="UniProtKB-UniRule"/>
</dbReference>
<dbReference type="GO" id="GO:0010181">
    <property type="term" value="F:FMN binding"/>
    <property type="evidence" value="ECO:0007669"/>
    <property type="project" value="TreeGrafter"/>
</dbReference>
<dbReference type="GO" id="GO:0008652">
    <property type="term" value="P:amino acid biosynthetic process"/>
    <property type="evidence" value="ECO:0007669"/>
    <property type="project" value="UniProtKB-KW"/>
</dbReference>
<dbReference type="GO" id="GO:0009073">
    <property type="term" value="P:aromatic amino acid family biosynthetic process"/>
    <property type="evidence" value="ECO:0007669"/>
    <property type="project" value="UniProtKB-KW"/>
</dbReference>
<dbReference type="GO" id="GO:0009423">
    <property type="term" value="P:chorismate biosynthetic process"/>
    <property type="evidence" value="ECO:0007669"/>
    <property type="project" value="UniProtKB-UniRule"/>
</dbReference>
<dbReference type="CDD" id="cd07304">
    <property type="entry name" value="Chorismate_synthase"/>
    <property type="match status" value="1"/>
</dbReference>
<dbReference type="FunFam" id="3.60.150.10:FF:000002">
    <property type="entry name" value="Chorismate synthase"/>
    <property type="match status" value="1"/>
</dbReference>
<dbReference type="Gene3D" id="3.60.150.10">
    <property type="entry name" value="Chorismate synthase AroC"/>
    <property type="match status" value="1"/>
</dbReference>
<dbReference type="HAMAP" id="MF_00300">
    <property type="entry name" value="Chorismate_synth"/>
    <property type="match status" value="1"/>
</dbReference>
<dbReference type="InterPro" id="IPR000453">
    <property type="entry name" value="Chorismate_synth"/>
</dbReference>
<dbReference type="InterPro" id="IPR035904">
    <property type="entry name" value="Chorismate_synth_AroC_sf"/>
</dbReference>
<dbReference type="InterPro" id="IPR020541">
    <property type="entry name" value="Chorismate_synthase_CS"/>
</dbReference>
<dbReference type="NCBIfam" id="TIGR00033">
    <property type="entry name" value="aroC"/>
    <property type="match status" value="1"/>
</dbReference>
<dbReference type="NCBIfam" id="NF003793">
    <property type="entry name" value="PRK05382.1"/>
    <property type="match status" value="1"/>
</dbReference>
<dbReference type="PANTHER" id="PTHR21085">
    <property type="entry name" value="CHORISMATE SYNTHASE"/>
    <property type="match status" value="1"/>
</dbReference>
<dbReference type="PANTHER" id="PTHR21085:SF0">
    <property type="entry name" value="CHORISMATE SYNTHASE"/>
    <property type="match status" value="1"/>
</dbReference>
<dbReference type="Pfam" id="PF01264">
    <property type="entry name" value="Chorismate_synt"/>
    <property type="match status" value="1"/>
</dbReference>
<dbReference type="PIRSF" id="PIRSF001456">
    <property type="entry name" value="Chorismate_synth"/>
    <property type="match status" value="1"/>
</dbReference>
<dbReference type="SUPFAM" id="SSF103263">
    <property type="entry name" value="Chorismate synthase, AroC"/>
    <property type="match status" value="1"/>
</dbReference>
<dbReference type="PROSITE" id="PS00788">
    <property type="entry name" value="CHORISMATE_SYNTHASE_2"/>
    <property type="match status" value="1"/>
</dbReference>
<dbReference type="PROSITE" id="PS00789">
    <property type="entry name" value="CHORISMATE_SYNTHASE_3"/>
    <property type="match status" value="1"/>
</dbReference>
<sequence>MTLRYLTAGESHGPALVAIAEGFPAGLPVDFEAVDRDLRRRQKGYGRGGRMKIETDAAQFLAGLRGGVTTGAPIALAVWNKDHENWKDLVSPYARGGRKFTQVRPGHADLAGALKYGLDDARDVLERASARSTAVIVALGALAKALLSSQGVEVCSRVVAIGPRDIRPDAPPTPAQRDAIEASDLHVDDEALAAEWRALIDAEKARGGSIGGAFDVYATGLPIGLGSHVHPDRRLDARLAGALCGVQAIRAVEIGDGTQVGRPGYEFHDAIHHDPARGFWRETNRAGGLEGGMTDGMPLRVRAYMKPIPTMLHPLATVDLATRAATQARYERSDVCAVPAAAVVGEAVVAWELANALLEKFGGDTVEDVRRAVEAYAARIR</sequence>
<protein>
    <recommendedName>
        <fullName evidence="1">Chorismate synthase</fullName>
        <shortName evidence="1">CS</shortName>
        <ecNumber evidence="1">4.2.3.5</ecNumber>
    </recommendedName>
    <alternativeName>
        <fullName evidence="1">5-enolpyruvylshikimate-3-phosphate phospholyase</fullName>
    </alternativeName>
</protein>
<reference key="1">
    <citation type="submission" date="2006-01" db="EMBL/GenBank/DDBJ databases">
        <title>Complete sequence of Anaeromyxobacter dehalogenans 2CP-C.</title>
        <authorList>
            <person name="Copeland A."/>
            <person name="Lucas S."/>
            <person name="Lapidus A."/>
            <person name="Barry K."/>
            <person name="Detter J.C."/>
            <person name="Glavina T."/>
            <person name="Hammon N."/>
            <person name="Israni S."/>
            <person name="Pitluck S."/>
            <person name="Brettin T."/>
            <person name="Bruce D."/>
            <person name="Han C."/>
            <person name="Tapia R."/>
            <person name="Gilna P."/>
            <person name="Kiss H."/>
            <person name="Schmutz J."/>
            <person name="Larimer F."/>
            <person name="Land M."/>
            <person name="Kyrpides N."/>
            <person name="Anderson I."/>
            <person name="Sanford R.A."/>
            <person name="Ritalahti K.M."/>
            <person name="Thomas H.S."/>
            <person name="Kirby J.R."/>
            <person name="Zhulin I.B."/>
            <person name="Loeffler F.E."/>
            <person name="Richardson P."/>
        </authorList>
    </citation>
    <scope>NUCLEOTIDE SEQUENCE [LARGE SCALE GENOMIC DNA]</scope>
    <source>
        <strain>2CP-C</strain>
    </source>
</reference>
<proteinExistence type="inferred from homology"/>
<gene>
    <name evidence="1" type="primary">aroC</name>
    <name type="ordered locus">Adeh_0186</name>
</gene>
<organism>
    <name type="scientific">Anaeromyxobacter dehalogenans (strain 2CP-C)</name>
    <dbReference type="NCBI Taxonomy" id="290397"/>
    <lineage>
        <taxon>Bacteria</taxon>
        <taxon>Pseudomonadati</taxon>
        <taxon>Myxococcota</taxon>
        <taxon>Myxococcia</taxon>
        <taxon>Myxococcales</taxon>
        <taxon>Cystobacterineae</taxon>
        <taxon>Anaeromyxobacteraceae</taxon>
        <taxon>Anaeromyxobacter</taxon>
    </lineage>
</organism>
<accession>Q2IMD4</accession>
<keyword id="KW-0028">Amino-acid biosynthesis</keyword>
<keyword id="KW-0057">Aromatic amino acid biosynthesis</keyword>
<keyword id="KW-0274">FAD</keyword>
<keyword id="KW-0285">Flavoprotein</keyword>
<keyword id="KW-0288">FMN</keyword>
<keyword id="KW-0456">Lyase</keyword>
<keyword id="KW-0521">NADP</keyword>
<keyword id="KW-1185">Reference proteome</keyword>
<feature type="chain" id="PRO_1000071965" description="Chorismate synthase">
    <location>
        <begin position="1"/>
        <end position="381"/>
    </location>
</feature>
<feature type="binding site" evidence="1">
    <location>
        <position position="41"/>
    </location>
    <ligand>
        <name>NADP(+)</name>
        <dbReference type="ChEBI" id="CHEBI:58349"/>
    </ligand>
</feature>
<feature type="binding site" evidence="1">
    <location>
        <position position="47"/>
    </location>
    <ligand>
        <name>NADP(+)</name>
        <dbReference type="ChEBI" id="CHEBI:58349"/>
    </ligand>
</feature>
<feature type="binding site" evidence="1">
    <location>
        <begin position="127"/>
        <end position="129"/>
    </location>
    <ligand>
        <name>FMN</name>
        <dbReference type="ChEBI" id="CHEBI:58210"/>
    </ligand>
</feature>
<feature type="binding site" evidence="1">
    <location>
        <begin position="247"/>
        <end position="248"/>
    </location>
    <ligand>
        <name>FMN</name>
        <dbReference type="ChEBI" id="CHEBI:58210"/>
    </ligand>
</feature>
<feature type="binding site" evidence="1">
    <location>
        <position position="291"/>
    </location>
    <ligand>
        <name>FMN</name>
        <dbReference type="ChEBI" id="CHEBI:58210"/>
    </ligand>
</feature>
<feature type="binding site" evidence="1">
    <location>
        <begin position="306"/>
        <end position="310"/>
    </location>
    <ligand>
        <name>FMN</name>
        <dbReference type="ChEBI" id="CHEBI:58210"/>
    </ligand>
</feature>
<feature type="binding site" evidence="1">
    <location>
        <position position="332"/>
    </location>
    <ligand>
        <name>FMN</name>
        <dbReference type="ChEBI" id="CHEBI:58210"/>
    </ligand>
</feature>
<evidence type="ECO:0000255" key="1">
    <source>
        <dbReference type="HAMAP-Rule" id="MF_00300"/>
    </source>
</evidence>